<reference key="1">
    <citation type="journal article" date="2004" name="DNA Res.">
        <title>Prediction of the coding sequences of mouse homologues of KIAA gene: IV. The complete nucleotide sequences of 500 mouse KIAA-homologous cDNAs identified by screening of terminal sequences of cDNA clones randomly sampled from size-fractionated libraries.</title>
        <authorList>
            <person name="Okazaki N."/>
            <person name="Kikuno R."/>
            <person name="Ohara R."/>
            <person name="Inamoto S."/>
            <person name="Koseki H."/>
            <person name="Hiraoka S."/>
            <person name="Saga Y."/>
            <person name="Seino S."/>
            <person name="Nishimura M."/>
            <person name="Kaisho T."/>
            <person name="Hoshino K."/>
            <person name="Kitamura H."/>
            <person name="Nagase T."/>
            <person name="Ohara O."/>
            <person name="Koga H."/>
        </authorList>
    </citation>
    <scope>NUCLEOTIDE SEQUENCE [LARGE SCALE MRNA]</scope>
    <source>
        <tissue>Embryonic tail</tissue>
    </source>
</reference>
<reference key="2">
    <citation type="journal article" date="2004" name="BMC Genomics">
        <title>Molecular cloning and characterization of the mouse Acdp gene family.</title>
        <authorList>
            <person name="Wang C.-Y."/>
            <person name="Yang P."/>
            <person name="Shi J.-D."/>
            <person name="Purohit S."/>
            <person name="Guo D."/>
            <person name="An H."/>
            <person name="Gu J.-G."/>
            <person name="Ling J."/>
            <person name="Dong Z."/>
            <person name="She J.-X."/>
        </authorList>
    </citation>
    <scope>NUCLEOTIDE SEQUENCE [MRNA] OF 99-771</scope>
    <scope>TISSUE SPECIFICITY</scope>
    <source>
        <tissue>Brain</tissue>
    </source>
</reference>
<reference key="3">
    <citation type="journal article" date="2009" name="Am. J. Hum. Genet.">
        <title>Mutations in CNNM4 cause recessive cone-rod dystrophy with amelogenesis imperfecta.</title>
        <authorList>
            <person name="Polok B."/>
            <person name="Escher P."/>
            <person name="Ambresin A."/>
            <person name="Chouery E."/>
            <person name="Bolay S."/>
            <person name="Meunier I."/>
            <person name="Nan F."/>
            <person name="Hamel C."/>
            <person name="Munier F.L."/>
            <person name="Thilo B."/>
            <person name="Megarbane A."/>
            <person name="Schorderet D.F."/>
        </authorList>
    </citation>
    <scope>TISSUE SPECIFICITY</scope>
    <scope>FUNCTION</scope>
</reference>
<reference key="4">
    <citation type="journal article" date="2009" name="Am. J. Hum. Genet.">
        <title>Mutations in CNNM4 cause Jalili syndrome, consisting of autosomal-recessive cone-rod dystrophy and amelogenesis imperfecta.</title>
        <authorList>
            <person name="Parry D.A."/>
            <person name="Mighell A.J."/>
            <person name="El-Sayed W."/>
            <person name="Shore R.C."/>
            <person name="Jalili I.K."/>
            <person name="Dollfus H."/>
            <person name="Bloch-Zupan A."/>
            <person name="Carlos R."/>
            <person name="Carr I.M."/>
            <person name="Downey L.M."/>
            <person name="Blain K.M."/>
            <person name="Mansfield D.C."/>
            <person name="Shahrabi M."/>
            <person name="Heidari M."/>
            <person name="Aref P."/>
            <person name="Abbasi M."/>
            <person name="Michaelides M."/>
            <person name="Moore A.T."/>
            <person name="Kirkham J."/>
            <person name="Inglehearn C.F."/>
        </authorList>
    </citation>
    <scope>TISSUE SPECIFICITY</scope>
    <scope>FUNCTION</scope>
</reference>
<reference key="5">
    <citation type="journal article" date="2009" name="Immunity">
        <title>The phagosomal proteome in interferon-gamma-activated macrophages.</title>
        <authorList>
            <person name="Trost M."/>
            <person name="English L."/>
            <person name="Lemieux S."/>
            <person name="Courcelles M."/>
            <person name="Desjardins M."/>
            <person name="Thibault P."/>
        </authorList>
    </citation>
    <scope>PHOSPHORYLATION [LARGE SCALE ANALYSIS] AT SER-661 AND SER-766</scope>
    <scope>IDENTIFICATION BY MASS SPECTROMETRY [LARGE SCALE ANALYSIS]</scope>
</reference>
<reference key="6">
    <citation type="journal article" date="2010" name="Cell">
        <title>A tissue-specific atlas of mouse protein phosphorylation and expression.</title>
        <authorList>
            <person name="Huttlin E.L."/>
            <person name="Jedrychowski M.P."/>
            <person name="Elias J.E."/>
            <person name="Goswami T."/>
            <person name="Rad R."/>
            <person name="Beausoleil S.A."/>
            <person name="Villen J."/>
            <person name="Haas W."/>
            <person name="Sowa M.E."/>
            <person name="Gygi S.P."/>
        </authorList>
    </citation>
    <scope>PHOSPHORYLATION [LARGE SCALE ANALYSIS] AT SER-661</scope>
    <scope>IDENTIFICATION BY MASS SPECTROMETRY [LARGE SCALE ANALYSIS]</scope>
    <source>
        <tissue>Kidney</tissue>
        <tissue>Testis</tissue>
    </source>
</reference>
<reference key="7">
    <citation type="journal article" date="2012" name="J. Biol. Chem.">
        <title>Membrane topology and intracellular processing of Cyclin M2 (CNNM2).</title>
        <authorList>
            <person name="de Baaij J.H."/>
            <person name="Stuiver M."/>
            <person name="Meij I.C."/>
            <person name="Lainez S."/>
            <person name="Kopplin K."/>
            <person name="Venselaar H."/>
            <person name="Mueller D."/>
            <person name="Bindels R.J."/>
            <person name="Hoenderop J.G."/>
        </authorList>
    </citation>
    <scope>TISSUE SPECIFICITY</scope>
</reference>
<accession>Q69ZF7</accession>
<accession>Q9JIM7</accession>
<protein>
    <recommendedName>
        <fullName>Metal transporter CNNM4</fullName>
    </recommendedName>
    <alternativeName>
        <fullName>Ancient conserved domain-containing protein 4</fullName>
        <shortName>mACDP4</shortName>
    </alternativeName>
    <alternativeName>
        <fullName>Cyclin-M4</fullName>
    </alternativeName>
</protein>
<organism>
    <name type="scientific">Mus musculus</name>
    <name type="common">Mouse</name>
    <dbReference type="NCBI Taxonomy" id="10090"/>
    <lineage>
        <taxon>Eukaryota</taxon>
        <taxon>Metazoa</taxon>
        <taxon>Chordata</taxon>
        <taxon>Craniata</taxon>
        <taxon>Vertebrata</taxon>
        <taxon>Euteleostomi</taxon>
        <taxon>Mammalia</taxon>
        <taxon>Eutheria</taxon>
        <taxon>Euarchontoglires</taxon>
        <taxon>Glires</taxon>
        <taxon>Rodentia</taxon>
        <taxon>Myomorpha</taxon>
        <taxon>Muroidea</taxon>
        <taxon>Muridae</taxon>
        <taxon>Murinae</taxon>
        <taxon>Mus</taxon>
        <taxon>Mus</taxon>
    </lineage>
</organism>
<evidence type="ECO:0000250" key="1"/>
<evidence type="ECO:0000250" key="2">
    <source>
        <dbReference type="UniProtKB" id="Q6P4Q7"/>
    </source>
</evidence>
<evidence type="ECO:0000255" key="3"/>
<evidence type="ECO:0000255" key="4">
    <source>
        <dbReference type="PROSITE-ProRule" id="PRU00703"/>
    </source>
</evidence>
<evidence type="ECO:0000255" key="5">
    <source>
        <dbReference type="PROSITE-ProRule" id="PRU01193"/>
    </source>
</evidence>
<evidence type="ECO:0000269" key="6">
    <source>
    </source>
</evidence>
<evidence type="ECO:0000269" key="7">
    <source>
    </source>
</evidence>
<evidence type="ECO:0000269" key="8">
    <source>
    </source>
</evidence>
<evidence type="ECO:0000269" key="9">
    <source>
    </source>
</evidence>
<evidence type="ECO:0000305" key="10"/>
<evidence type="ECO:0007744" key="11">
    <source>
    </source>
</evidence>
<evidence type="ECO:0007744" key="12">
    <source>
    </source>
</evidence>
<gene>
    <name type="primary">Cnnm4</name>
    <name type="synonym">Acdp4</name>
    <name type="synonym">Kiaa1592</name>
</gene>
<comment type="function">
    <text evidence="1 7 8">Probable metal transporter. The interaction with the metal ion chaperone COX11 suggests that it may play a role in sensory neuron functions (By similarity). May play a role in biomineralization and retinal function.</text>
</comment>
<comment type="subunit">
    <text evidence="1">Interacts with COX11.</text>
</comment>
<comment type="subcellular location">
    <subcellularLocation>
        <location evidence="1">Cell membrane</location>
        <topology evidence="1">Multi-pass membrane protein</topology>
    </subcellularLocation>
</comment>
<comment type="tissue specificity">
    <text evidence="6 7 8 9">Cornea, retina, teeth (at protein level). In the retina it is predominantly localized to the outer plexiform layer, inner plexiform layer and ganglion cell layer. In the tooth strongest expression is observed in the cell body of the ameloblasts. Expressed at high levels in the gastrointestinal tract and testis.</text>
</comment>
<comment type="miscellaneous">
    <text>Shares weak sequence similarity with the cyclin family, hence its name. However, it has no cyclin-like function in vivo.</text>
</comment>
<comment type="similarity">
    <text evidence="10">Belongs to the ACDP family.</text>
</comment>
<comment type="sequence caution" evidence="10">
    <conflict type="erroneous initiation">
        <sequence resource="EMBL-CDS" id="AAF86375"/>
    </conflict>
    <text>Truncated N-terminus.</text>
</comment>
<comment type="sequence caution" evidence="10">
    <conflict type="erroneous initiation">
        <sequence resource="EMBL-CDS" id="BAD32487"/>
    </conflict>
    <text>Extended N-terminus.</text>
</comment>
<sequence length="771" mass="86626">MAPGGGGGRRDGWPARGRLLLAALLLLWTRAASGQSSPQQSVILGMRLASCNKSCGMNPDGIIFVSEGSTVNLRLYGHSLGDISSNLISFTEVDDAEAVHNSTNCLELTKDLVVQRLVNVSRGNTSGMLVVITKFLRRSENMKLYALCTRPRADGPWTRWTDKDSLLFMVEEHGRFLPLWLHILLVMVLLVLSGIFSGLNLGLMALDPMELRIVQNCGTEKERKYARKIEPIRRKGNYLLCSLLLGNVLVNTSLTILLDNLIGSGIMAVASSTIGIVIFGEILPQALCSRHGLAVGANTIVLTKVFMLLTFPLSFPISKLLDFVLGQEIRTVYNREKLMEMLKVTEPYNDLVKEELNMIQGALELRTKTVEDIMTQLHDCFMIRSDAILDFNTMSEIMESGYTRIPVFEDEQSNIVDILYVKDLAFVDPDDCTPLKTITRFYNHPVHFVFHDTKLDAMLEEFKKGKSHLAIVQKVNNEGEGDPFYEVLGLVTLEDVIEEIIKSEILDESDMYTDNRTRKRVSVKNKRDFSAFKDTDNELKVKISPQLLLAAHRFLATEVPQFSPSLMSEKILLRLLKYPDVIQELRFNEHNRYCVRHYLYTRNKPADCFVLILQGKVEVEAGKENMKFETGAFSYYGTMALSVAPPDRSPALPTPLSRSASLSYPDRNTDLTSTSLAGSNQFGSCILGQYVSDFSVRALTDLQYIKITRQQYQNGLMASRMDNSPQPTFDGCATCSENFMERPELPPVDETTTLLNERNSLLHRASEEETI</sequence>
<feature type="chain" id="PRO_0000295766" description="Metal transporter CNNM4">
    <location>
        <begin position="1"/>
        <end position="771"/>
    </location>
</feature>
<feature type="topological domain" description="Extracellular" evidence="3">
    <location>
        <begin position="1"/>
        <end position="175"/>
    </location>
</feature>
<feature type="transmembrane region" description="Helical" evidence="3">
    <location>
        <begin position="176"/>
        <end position="196"/>
    </location>
</feature>
<feature type="topological domain" description="Cytoplasmic" evidence="3">
    <location>
        <begin position="197"/>
        <end position="237"/>
    </location>
</feature>
<feature type="intramembrane region" description="Helical" evidence="3">
    <location>
        <begin position="238"/>
        <end position="258"/>
    </location>
</feature>
<feature type="topological domain" description="Cytoplasmic" evidence="3">
    <location>
        <begin position="259"/>
        <end position="261"/>
    </location>
</feature>
<feature type="transmembrane region" description="Helical" evidence="3">
    <location>
        <begin position="262"/>
        <end position="282"/>
    </location>
</feature>
<feature type="topological domain" description="Extracellular" evidence="3">
    <location>
        <begin position="283"/>
        <end position="290"/>
    </location>
</feature>
<feature type="transmembrane region" description="Helical" evidence="3">
    <location>
        <begin position="291"/>
        <end position="313"/>
    </location>
</feature>
<feature type="topological domain" description="Cytoplasmic" evidence="3">
    <location>
        <begin position="314"/>
        <end position="771"/>
    </location>
</feature>
<feature type="domain" description="CNNM transmembrane" evidence="5">
    <location>
        <begin position="175"/>
        <end position="355"/>
    </location>
</feature>
<feature type="domain" description="CBS 1" evidence="4">
    <location>
        <begin position="374"/>
        <end position="435"/>
    </location>
</feature>
<feature type="domain" description="CBS 2" evidence="4">
    <location>
        <begin position="442"/>
        <end position="508"/>
    </location>
</feature>
<feature type="modified residue" description="Phosphoserine" evidence="2">
    <location>
        <position position="657"/>
    </location>
</feature>
<feature type="modified residue" description="Phosphoserine" evidence="11 12">
    <location>
        <position position="661"/>
    </location>
</feature>
<feature type="modified residue" description="Phosphoserine" evidence="11">
    <location>
        <position position="766"/>
    </location>
</feature>
<feature type="glycosylation site" description="N-linked (GlcNAc...) asparagine" evidence="3">
    <location>
        <position position="119"/>
    </location>
</feature>
<proteinExistence type="evidence at protein level"/>
<dbReference type="EMBL" id="AK173209">
    <property type="protein sequence ID" value="BAD32487.1"/>
    <property type="status" value="ALT_INIT"/>
    <property type="molecule type" value="mRNA"/>
</dbReference>
<dbReference type="EMBL" id="AF216963">
    <property type="protein sequence ID" value="AAF86375.1"/>
    <property type="status" value="ALT_INIT"/>
    <property type="molecule type" value="mRNA"/>
</dbReference>
<dbReference type="CCDS" id="CCDS14879.2"/>
<dbReference type="RefSeq" id="NP_291048.2">
    <property type="nucleotide sequence ID" value="NM_033570.2"/>
</dbReference>
<dbReference type="SMR" id="Q69ZF7"/>
<dbReference type="FunCoup" id="Q69ZF7">
    <property type="interactions" value="130"/>
</dbReference>
<dbReference type="STRING" id="10090.ENSMUSP00000121317"/>
<dbReference type="GlyConnect" id="2511">
    <property type="glycosylation" value="5 N-Linked glycans (1 site)"/>
</dbReference>
<dbReference type="GlyCosmos" id="Q69ZF7">
    <property type="glycosylation" value="1 site, 5 glycans"/>
</dbReference>
<dbReference type="GlyGen" id="Q69ZF7">
    <property type="glycosylation" value="5 sites, 10 N-linked glycans (5 sites)"/>
</dbReference>
<dbReference type="iPTMnet" id="Q69ZF7"/>
<dbReference type="PhosphoSitePlus" id="Q69ZF7"/>
<dbReference type="SwissPalm" id="Q69ZF7"/>
<dbReference type="jPOST" id="Q69ZF7"/>
<dbReference type="PaxDb" id="10090-ENSMUSP00000121317"/>
<dbReference type="PeptideAtlas" id="Q69ZF7"/>
<dbReference type="ProteomicsDB" id="283456"/>
<dbReference type="Pumba" id="Q69ZF7"/>
<dbReference type="Antibodypedia" id="17482">
    <property type="antibodies" value="153 antibodies from 22 providers"/>
</dbReference>
<dbReference type="Ensembl" id="ENSMUST00000153128.2">
    <property type="protein sequence ID" value="ENSMUSP00000121317.2"/>
    <property type="gene ID" value="ENSMUSG00000037408.11"/>
</dbReference>
<dbReference type="GeneID" id="94220"/>
<dbReference type="KEGG" id="mmu:94220"/>
<dbReference type="UCSC" id="uc007aqg.2">
    <property type="organism name" value="mouse"/>
</dbReference>
<dbReference type="AGR" id="MGI:2151060"/>
<dbReference type="CTD" id="26504"/>
<dbReference type="MGI" id="MGI:2151060">
    <property type="gene designation" value="Cnnm4"/>
</dbReference>
<dbReference type="VEuPathDB" id="HostDB:ENSMUSG00000037408"/>
<dbReference type="eggNOG" id="KOG2118">
    <property type="taxonomic scope" value="Eukaryota"/>
</dbReference>
<dbReference type="GeneTree" id="ENSGT00940000156317"/>
<dbReference type="HOGENOM" id="CLU_011310_1_1_1"/>
<dbReference type="InParanoid" id="Q69ZF7"/>
<dbReference type="OMA" id="VYMRVHR"/>
<dbReference type="OrthoDB" id="5353557at2759"/>
<dbReference type="PhylomeDB" id="Q69ZF7"/>
<dbReference type="TreeFam" id="TF101012"/>
<dbReference type="BioGRID-ORCS" id="94220">
    <property type="hits" value="2 hits in 78 CRISPR screens"/>
</dbReference>
<dbReference type="ChiTaRS" id="Cnnm4">
    <property type="organism name" value="mouse"/>
</dbReference>
<dbReference type="PRO" id="PR:Q69ZF7"/>
<dbReference type="Proteomes" id="UP000000589">
    <property type="component" value="Chromosome 1"/>
</dbReference>
<dbReference type="RNAct" id="Q69ZF7">
    <property type="molecule type" value="protein"/>
</dbReference>
<dbReference type="Bgee" id="ENSMUSG00000037408">
    <property type="expression patterns" value="Expressed in spermatocyte and 66 other cell types or tissues"/>
</dbReference>
<dbReference type="GO" id="GO:0016323">
    <property type="term" value="C:basolateral plasma membrane"/>
    <property type="evidence" value="ECO:0000314"/>
    <property type="project" value="MGI"/>
</dbReference>
<dbReference type="GO" id="GO:0032991">
    <property type="term" value="C:protein-containing complex"/>
    <property type="evidence" value="ECO:0007669"/>
    <property type="project" value="Ensembl"/>
</dbReference>
<dbReference type="GO" id="GO:0015095">
    <property type="term" value="F:magnesium ion transmembrane transporter activity"/>
    <property type="evidence" value="ECO:0000314"/>
    <property type="project" value="MGI"/>
</dbReference>
<dbReference type="GO" id="GO:0015081">
    <property type="term" value="F:sodium ion transmembrane transporter activity"/>
    <property type="evidence" value="ECO:0000314"/>
    <property type="project" value="MGI"/>
</dbReference>
<dbReference type="GO" id="GO:0070166">
    <property type="term" value="P:enamel mineralization"/>
    <property type="evidence" value="ECO:0000315"/>
    <property type="project" value="MGI"/>
</dbReference>
<dbReference type="GO" id="GO:0030003">
    <property type="term" value="P:intracellular monoatomic cation homeostasis"/>
    <property type="evidence" value="ECO:0007669"/>
    <property type="project" value="Ensembl"/>
</dbReference>
<dbReference type="GO" id="GO:0010960">
    <property type="term" value="P:magnesium ion homeostasis"/>
    <property type="evidence" value="ECO:0000315"/>
    <property type="project" value="MGI"/>
</dbReference>
<dbReference type="GO" id="GO:0015693">
    <property type="term" value="P:magnesium ion transport"/>
    <property type="evidence" value="ECO:0000315"/>
    <property type="project" value="MGI"/>
</dbReference>
<dbReference type="GO" id="GO:0007601">
    <property type="term" value="P:visual perception"/>
    <property type="evidence" value="ECO:0007669"/>
    <property type="project" value="UniProtKB-KW"/>
</dbReference>
<dbReference type="CDD" id="cd04590">
    <property type="entry name" value="CBS_pair_CorC_HlyC_assoc"/>
    <property type="match status" value="1"/>
</dbReference>
<dbReference type="FunFam" id="3.10.580.10:FF:000001">
    <property type="entry name" value="Putative metal transporter CNNM3 isoform 2"/>
    <property type="match status" value="1"/>
</dbReference>
<dbReference type="Gene3D" id="3.10.580.10">
    <property type="entry name" value="CBS-domain"/>
    <property type="match status" value="1"/>
</dbReference>
<dbReference type="Gene3D" id="2.60.120.10">
    <property type="entry name" value="Jelly Rolls"/>
    <property type="match status" value="1"/>
</dbReference>
<dbReference type="InterPro" id="IPR045095">
    <property type="entry name" value="ACDP"/>
</dbReference>
<dbReference type="InterPro" id="IPR000644">
    <property type="entry name" value="CBS_dom"/>
</dbReference>
<dbReference type="InterPro" id="IPR046342">
    <property type="entry name" value="CBS_dom_sf"/>
</dbReference>
<dbReference type="InterPro" id="IPR018490">
    <property type="entry name" value="cNMP-bd_dom_sf"/>
</dbReference>
<dbReference type="InterPro" id="IPR002550">
    <property type="entry name" value="CNNM"/>
</dbReference>
<dbReference type="InterPro" id="IPR044751">
    <property type="entry name" value="Ion_transp-like_CBS"/>
</dbReference>
<dbReference type="InterPro" id="IPR014710">
    <property type="entry name" value="RmlC-like_jellyroll"/>
</dbReference>
<dbReference type="PANTHER" id="PTHR12064">
    <property type="entry name" value="METAL TRANSPORTER CNNM"/>
    <property type="match status" value="1"/>
</dbReference>
<dbReference type="PANTHER" id="PTHR12064:SF26">
    <property type="entry name" value="METAL TRANSPORTER CNNM4"/>
    <property type="match status" value="1"/>
</dbReference>
<dbReference type="Pfam" id="PF00571">
    <property type="entry name" value="CBS"/>
    <property type="match status" value="1"/>
</dbReference>
<dbReference type="Pfam" id="PF01595">
    <property type="entry name" value="CNNM"/>
    <property type="match status" value="1"/>
</dbReference>
<dbReference type="Pfam" id="PF25511">
    <property type="entry name" value="Ig_CNNM4_N"/>
    <property type="match status" value="1"/>
</dbReference>
<dbReference type="SUPFAM" id="SSF51206">
    <property type="entry name" value="cAMP-binding domain-like"/>
    <property type="match status" value="1"/>
</dbReference>
<dbReference type="SUPFAM" id="SSF54631">
    <property type="entry name" value="CBS-domain pair"/>
    <property type="match status" value="1"/>
</dbReference>
<dbReference type="PROSITE" id="PS51371">
    <property type="entry name" value="CBS"/>
    <property type="match status" value="2"/>
</dbReference>
<dbReference type="PROSITE" id="PS51846">
    <property type="entry name" value="CNNM"/>
    <property type="match status" value="1"/>
</dbReference>
<keyword id="KW-0091">Biomineralization</keyword>
<keyword id="KW-0129">CBS domain</keyword>
<keyword id="KW-1003">Cell membrane</keyword>
<keyword id="KW-0325">Glycoprotein</keyword>
<keyword id="KW-0406">Ion transport</keyword>
<keyword id="KW-0472">Membrane</keyword>
<keyword id="KW-0597">Phosphoprotein</keyword>
<keyword id="KW-1185">Reference proteome</keyword>
<keyword id="KW-0677">Repeat</keyword>
<keyword id="KW-0716">Sensory transduction</keyword>
<keyword id="KW-0812">Transmembrane</keyword>
<keyword id="KW-1133">Transmembrane helix</keyword>
<keyword id="KW-0813">Transport</keyword>
<keyword id="KW-0844">Vision</keyword>
<name>CNNM4_MOUSE</name>